<organism>
    <name type="scientific">Caenorhabditis elegans</name>
    <dbReference type="NCBI Taxonomy" id="6239"/>
    <lineage>
        <taxon>Eukaryota</taxon>
        <taxon>Metazoa</taxon>
        <taxon>Ecdysozoa</taxon>
        <taxon>Nematoda</taxon>
        <taxon>Chromadorea</taxon>
        <taxon>Rhabditida</taxon>
        <taxon>Rhabditina</taxon>
        <taxon>Rhabditomorpha</taxon>
        <taxon>Rhabditoidea</taxon>
        <taxon>Rhabditidae</taxon>
        <taxon>Peloderinae</taxon>
        <taxon>Caenorhabditis</taxon>
    </lineage>
</organism>
<accession>Q20696</accession>
<feature type="chain" id="PRO_0000221077" description="Sphingomyelin synthase-related 1">
    <location>
        <begin position="1"/>
        <end position="483"/>
    </location>
</feature>
<feature type="transmembrane region" description="Helical" evidence="2">
    <location>
        <begin position="182"/>
        <end position="202"/>
    </location>
</feature>
<feature type="transmembrane region" description="Helical" evidence="2">
    <location>
        <begin position="230"/>
        <end position="250"/>
    </location>
</feature>
<feature type="transmembrane region" description="Helical" evidence="2">
    <location>
        <begin position="261"/>
        <end position="281"/>
    </location>
</feature>
<feature type="transmembrane region" description="Helical" evidence="2">
    <location>
        <begin position="349"/>
        <end position="369"/>
    </location>
</feature>
<feature type="transmembrane region" description="Helical" evidence="2">
    <location>
        <begin position="376"/>
        <end position="396"/>
    </location>
</feature>
<feature type="topological domain" description="Cytoplasmic" evidence="2">
    <location>
        <begin position="397"/>
        <end position="483"/>
    </location>
</feature>
<feature type="region of interest" description="Disordered" evidence="3">
    <location>
        <begin position="450"/>
        <end position="483"/>
    </location>
</feature>
<feature type="compositionally biased region" description="Basic and acidic residues" evidence="3">
    <location>
        <begin position="450"/>
        <end position="461"/>
    </location>
</feature>
<feature type="active site" evidence="1">
    <location>
        <position position="330"/>
    </location>
</feature>
<feature type="active site" evidence="1">
    <location>
        <position position="373"/>
    </location>
</feature>
<feature type="active site" evidence="1">
    <location>
        <position position="377"/>
    </location>
</feature>
<keyword id="KW-0443">Lipid metabolism</keyword>
<keyword id="KW-0472">Membrane</keyword>
<keyword id="KW-1185">Reference proteome</keyword>
<keyword id="KW-0746">Sphingolipid metabolism</keyword>
<keyword id="KW-0808">Transferase</keyword>
<keyword id="KW-0812">Transmembrane</keyword>
<keyword id="KW-1133">Transmembrane helix</keyword>
<proteinExistence type="inferred from homology"/>
<reference key="1">
    <citation type="journal article" date="1998" name="Science">
        <title>Genome sequence of the nematode C. elegans: a platform for investigating biology.</title>
        <authorList>
            <consortium name="The C. elegans sequencing consortium"/>
        </authorList>
    </citation>
    <scope>NUCLEOTIDE SEQUENCE [LARGE SCALE GENOMIC DNA]</scope>
    <source>
        <strain>Bristol N2</strain>
    </source>
</reference>
<reference evidence="4" key="2">
    <citation type="journal article" date="2004" name="EMBO J.">
        <title>Identification of a family of animal sphingomyelin synthases.</title>
        <authorList>
            <person name="Huitema K."/>
            <person name="Van Den Dikkenberg J."/>
            <person name="Brouwers J.F.H.M."/>
            <person name="Holthuis J.C."/>
        </authorList>
    </citation>
    <scope>IDENTIFICATION</scope>
</reference>
<dbReference type="EC" id="2.7.8.-"/>
<dbReference type="EMBL" id="FO081052">
    <property type="protein sequence ID" value="CCD68826.1"/>
    <property type="molecule type" value="Genomic_DNA"/>
</dbReference>
<dbReference type="PIR" id="T16443">
    <property type="entry name" value="T16443"/>
</dbReference>
<dbReference type="RefSeq" id="NP_508389.1">
    <property type="nucleotide sequence ID" value="NM_075988.9"/>
</dbReference>
<dbReference type="SMR" id="Q20696"/>
<dbReference type="FunCoup" id="Q20696">
    <property type="interactions" value="1694"/>
</dbReference>
<dbReference type="STRING" id="6239.F53B1.2.1"/>
<dbReference type="PaxDb" id="6239-F53B1.2"/>
<dbReference type="PeptideAtlas" id="Q20696"/>
<dbReference type="EnsemblMetazoa" id="F53B1.2.1">
    <property type="protein sequence ID" value="F53B1.2.1"/>
    <property type="gene ID" value="WBGene00018735"/>
</dbReference>
<dbReference type="GeneID" id="180524"/>
<dbReference type="KEGG" id="cel:CELE_F53B1.2"/>
<dbReference type="UCSC" id="F53B1.2">
    <property type="organism name" value="c. elegans"/>
</dbReference>
<dbReference type="AGR" id="WB:WBGene00018735"/>
<dbReference type="CTD" id="180524"/>
<dbReference type="WormBase" id="F53B1.2">
    <property type="protein sequence ID" value="CE04642"/>
    <property type="gene ID" value="WBGene00018735"/>
</dbReference>
<dbReference type="eggNOG" id="KOG3058">
    <property type="taxonomic scope" value="Eukaryota"/>
</dbReference>
<dbReference type="GeneTree" id="ENSGT00940000155540"/>
<dbReference type="HOGENOM" id="CLU_027104_1_0_1"/>
<dbReference type="InParanoid" id="Q20696"/>
<dbReference type="OMA" id="YGDIWAK"/>
<dbReference type="OrthoDB" id="422827at2759"/>
<dbReference type="PhylomeDB" id="Q20696"/>
<dbReference type="Reactome" id="R-CEL-1660661">
    <property type="pathway name" value="Sphingolipid de novo biosynthesis"/>
</dbReference>
<dbReference type="PRO" id="PR:Q20696"/>
<dbReference type="Proteomes" id="UP000001940">
    <property type="component" value="Chromosome X"/>
</dbReference>
<dbReference type="Bgee" id="WBGene00018735">
    <property type="expression patterns" value="Expressed in embryo and 4 other cell types or tissues"/>
</dbReference>
<dbReference type="GO" id="GO:0005789">
    <property type="term" value="C:endoplasmic reticulum membrane"/>
    <property type="evidence" value="ECO:0000318"/>
    <property type="project" value="GO_Central"/>
</dbReference>
<dbReference type="GO" id="GO:0000139">
    <property type="term" value="C:Golgi membrane"/>
    <property type="evidence" value="ECO:0000318"/>
    <property type="project" value="GO_Central"/>
</dbReference>
<dbReference type="GO" id="GO:0016020">
    <property type="term" value="C:membrane"/>
    <property type="evidence" value="ECO:0000303"/>
    <property type="project" value="UniProtKB"/>
</dbReference>
<dbReference type="GO" id="GO:0005886">
    <property type="term" value="C:plasma membrane"/>
    <property type="evidence" value="ECO:0000318"/>
    <property type="project" value="GO_Central"/>
</dbReference>
<dbReference type="GO" id="GO:0047493">
    <property type="term" value="F:ceramide cholinephosphotransferase activity"/>
    <property type="evidence" value="ECO:0000318"/>
    <property type="project" value="GO_Central"/>
</dbReference>
<dbReference type="GO" id="GO:0033188">
    <property type="term" value="F:sphingomyelin synthase activity"/>
    <property type="evidence" value="ECO:0000318"/>
    <property type="project" value="GO_Central"/>
</dbReference>
<dbReference type="GO" id="GO:0046513">
    <property type="term" value="P:ceramide biosynthetic process"/>
    <property type="evidence" value="ECO:0000318"/>
    <property type="project" value="GO_Central"/>
</dbReference>
<dbReference type="GO" id="GO:0006686">
    <property type="term" value="P:sphingomyelin biosynthetic process"/>
    <property type="evidence" value="ECO:0000303"/>
    <property type="project" value="UniProtKB"/>
</dbReference>
<dbReference type="CDD" id="cd09515">
    <property type="entry name" value="SAM_SGMS1-like"/>
    <property type="match status" value="1"/>
</dbReference>
<dbReference type="FunFam" id="1.10.150.50:FF:000037">
    <property type="entry name" value="sphingomyelin synthase-related protein 1 isoform X1"/>
    <property type="match status" value="1"/>
</dbReference>
<dbReference type="Gene3D" id="1.10.150.50">
    <property type="entry name" value="Transcription Factor, Ets-1"/>
    <property type="match status" value="1"/>
</dbReference>
<dbReference type="InterPro" id="IPR001660">
    <property type="entry name" value="SAM"/>
</dbReference>
<dbReference type="InterPro" id="IPR013761">
    <property type="entry name" value="SAM/pointed_sf"/>
</dbReference>
<dbReference type="InterPro" id="IPR045221">
    <property type="entry name" value="Sphingomyelin_synth-like"/>
</dbReference>
<dbReference type="InterPro" id="IPR025749">
    <property type="entry name" value="Sphingomyelin_synth-like_dom"/>
</dbReference>
<dbReference type="PANTHER" id="PTHR21290:SF25">
    <property type="entry name" value="SPHINGOMYELIN SYNTHASE-RELATED PROTEIN 1"/>
    <property type="match status" value="1"/>
</dbReference>
<dbReference type="PANTHER" id="PTHR21290">
    <property type="entry name" value="SPHINGOMYELIN SYNTHETASE"/>
    <property type="match status" value="1"/>
</dbReference>
<dbReference type="Pfam" id="PF14360">
    <property type="entry name" value="PAP2_C"/>
    <property type="match status" value="1"/>
</dbReference>
<dbReference type="Pfam" id="PF00536">
    <property type="entry name" value="SAM_1"/>
    <property type="match status" value="1"/>
</dbReference>
<dbReference type="SMART" id="SM00454">
    <property type="entry name" value="SAM"/>
    <property type="match status" value="1"/>
</dbReference>
<dbReference type="SUPFAM" id="SSF47769">
    <property type="entry name" value="SAM/Pointed domain"/>
    <property type="match status" value="1"/>
</dbReference>
<dbReference type="PROSITE" id="PS50105">
    <property type="entry name" value="SAM_DOMAIN"/>
    <property type="match status" value="1"/>
</dbReference>
<sequence>MLDNRPIPADPNEWRCEDVGNWLKKIGMAKYADLIAMKHKVDGKCLLALTDTDLKDPPVSINCLGDIKKILFAIEFLSQKVVEIGNSGVHHRSTPNGNGPSLKNSKDGLLVEYNEQNHLSISGEDVYTTTRRAEIVEDEETLLDTLAKSSDGTSTVQLISREEIIRQVERPDTYFKSVAKLLIAFAYSSLSFLMTSFVMVLVHDRVPDTKTYPPLPDIVLDNVPHIPWAFDMCETIGLVLAVVWFTVLFFHNQRVIVARRMFSLLGTVFLLRCFTMLITSLSVPGIHLQCEARPNTTMQEKLHKAFHIWSNLGMSLHGVRSCGDYMFSGHTTVITMISHFITEYTPADWTGLHTFTWVLNCFAIFLILAAHEHYSIDVFIAFYISSRMFLYYHAYAYNHAGITATDYRMRTWFPLGWFFEYGSQGKVENEFSLPINIRIPRRVFFAKSEEPKITPKSDSSRKRSSVVAAKQNGNSKNHTKKHN</sequence>
<name>SMSR1_CAEEL</name>
<protein>
    <recommendedName>
        <fullName>Sphingomyelin synthase-related 1</fullName>
        <ecNumber>2.7.8.-</ecNumber>
    </recommendedName>
</protein>
<evidence type="ECO:0000250" key="1"/>
<evidence type="ECO:0000255" key="2"/>
<evidence type="ECO:0000256" key="3">
    <source>
        <dbReference type="SAM" id="MobiDB-lite"/>
    </source>
</evidence>
<evidence type="ECO:0000305" key="4"/>
<comment type="subcellular location">
    <subcellularLocation>
        <location evidence="4">Membrane</location>
        <topology evidence="4">Multi-pass membrane protein</topology>
    </subcellularLocation>
</comment>
<comment type="similarity">
    <text evidence="4">Belongs to the sphingomyelin synthase family.</text>
</comment>
<gene>
    <name type="ORF">F53B1.2</name>
</gene>